<gene>
    <name evidence="1" type="primary">ispE</name>
    <name type="ordered locus">amb4435</name>
</gene>
<feature type="chain" id="PRO_0000235101" description="4-diphosphocytidyl-2-C-methyl-D-erythritol kinase">
    <location>
        <begin position="1"/>
        <end position="285"/>
    </location>
</feature>
<feature type="active site" evidence="1">
    <location>
        <position position="11"/>
    </location>
</feature>
<feature type="active site" evidence="1">
    <location>
        <position position="137"/>
    </location>
</feature>
<feature type="binding site" evidence="1">
    <location>
        <begin position="95"/>
        <end position="105"/>
    </location>
    <ligand>
        <name>ATP</name>
        <dbReference type="ChEBI" id="CHEBI:30616"/>
    </ligand>
</feature>
<evidence type="ECO:0000255" key="1">
    <source>
        <dbReference type="HAMAP-Rule" id="MF_00061"/>
    </source>
</evidence>
<comment type="function">
    <text evidence="1">Catalyzes the phosphorylation of the position 2 hydroxy group of 4-diphosphocytidyl-2C-methyl-D-erythritol.</text>
</comment>
<comment type="catalytic activity">
    <reaction evidence="1">
        <text>4-CDP-2-C-methyl-D-erythritol + ATP = 4-CDP-2-C-methyl-D-erythritol 2-phosphate + ADP + H(+)</text>
        <dbReference type="Rhea" id="RHEA:18437"/>
        <dbReference type="ChEBI" id="CHEBI:15378"/>
        <dbReference type="ChEBI" id="CHEBI:30616"/>
        <dbReference type="ChEBI" id="CHEBI:57823"/>
        <dbReference type="ChEBI" id="CHEBI:57919"/>
        <dbReference type="ChEBI" id="CHEBI:456216"/>
        <dbReference type="EC" id="2.7.1.148"/>
    </reaction>
</comment>
<comment type="pathway">
    <text evidence="1">Isoprenoid biosynthesis; isopentenyl diphosphate biosynthesis via DXP pathway; isopentenyl diphosphate from 1-deoxy-D-xylulose 5-phosphate: step 3/6.</text>
</comment>
<comment type="similarity">
    <text evidence="1">Belongs to the GHMP kinase family. IspE subfamily.</text>
</comment>
<keyword id="KW-0067">ATP-binding</keyword>
<keyword id="KW-0414">Isoprene biosynthesis</keyword>
<keyword id="KW-0418">Kinase</keyword>
<keyword id="KW-0547">Nucleotide-binding</keyword>
<keyword id="KW-0808">Transferase</keyword>
<protein>
    <recommendedName>
        <fullName evidence="1">4-diphosphocytidyl-2-C-methyl-D-erythritol kinase</fullName>
        <shortName evidence="1">CMK</shortName>
        <ecNumber evidence="1">2.7.1.148</ecNumber>
    </recommendedName>
    <alternativeName>
        <fullName evidence="1">4-(cytidine-5'-diphospho)-2-C-methyl-D-erythritol kinase</fullName>
    </alternativeName>
</protein>
<organism>
    <name type="scientific">Paramagnetospirillum magneticum (strain ATCC 700264 / AMB-1)</name>
    <name type="common">Magnetospirillum magneticum</name>
    <dbReference type="NCBI Taxonomy" id="342108"/>
    <lineage>
        <taxon>Bacteria</taxon>
        <taxon>Pseudomonadati</taxon>
        <taxon>Pseudomonadota</taxon>
        <taxon>Alphaproteobacteria</taxon>
        <taxon>Rhodospirillales</taxon>
        <taxon>Magnetospirillaceae</taxon>
        <taxon>Paramagnetospirillum</taxon>
    </lineage>
</organism>
<name>ISPE_PARM1</name>
<proteinExistence type="inferred from homology"/>
<accession>Q2VYT6</accession>
<dbReference type="EC" id="2.7.1.148" evidence="1"/>
<dbReference type="EMBL" id="AP007255">
    <property type="protein sequence ID" value="BAE53239.1"/>
    <property type="molecule type" value="Genomic_DNA"/>
</dbReference>
<dbReference type="RefSeq" id="WP_011386779.1">
    <property type="nucleotide sequence ID" value="NC_007626.1"/>
</dbReference>
<dbReference type="SMR" id="Q2VYT6"/>
<dbReference type="STRING" id="342108.amb4435"/>
<dbReference type="KEGG" id="mag:amb4435"/>
<dbReference type="HOGENOM" id="CLU_053057_1_0_5"/>
<dbReference type="OrthoDB" id="9809438at2"/>
<dbReference type="UniPathway" id="UPA00056">
    <property type="reaction ID" value="UER00094"/>
</dbReference>
<dbReference type="Proteomes" id="UP000007058">
    <property type="component" value="Chromosome"/>
</dbReference>
<dbReference type="GO" id="GO:0050515">
    <property type="term" value="F:4-(cytidine 5'-diphospho)-2-C-methyl-D-erythritol kinase activity"/>
    <property type="evidence" value="ECO:0007669"/>
    <property type="project" value="UniProtKB-UniRule"/>
</dbReference>
<dbReference type="GO" id="GO:0005524">
    <property type="term" value="F:ATP binding"/>
    <property type="evidence" value="ECO:0007669"/>
    <property type="project" value="UniProtKB-UniRule"/>
</dbReference>
<dbReference type="GO" id="GO:0019288">
    <property type="term" value="P:isopentenyl diphosphate biosynthetic process, methylerythritol 4-phosphate pathway"/>
    <property type="evidence" value="ECO:0007669"/>
    <property type="project" value="UniProtKB-UniRule"/>
</dbReference>
<dbReference type="GO" id="GO:0016114">
    <property type="term" value="P:terpenoid biosynthetic process"/>
    <property type="evidence" value="ECO:0007669"/>
    <property type="project" value="InterPro"/>
</dbReference>
<dbReference type="Gene3D" id="3.30.230.10">
    <property type="match status" value="1"/>
</dbReference>
<dbReference type="Gene3D" id="3.30.70.890">
    <property type="entry name" value="GHMP kinase, C-terminal domain"/>
    <property type="match status" value="1"/>
</dbReference>
<dbReference type="HAMAP" id="MF_00061">
    <property type="entry name" value="IspE"/>
    <property type="match status" value="1"/>
</dbReference>
<dbReference type="InterPro" id="IPR013750">
    <property type="entry name" value="GHMP_kinase_C_dom"/>
</dbReference>
<dbReference type="InterPro" id="IPR036554">
    <property type="entry name" value="GHMP_kinase_C_sf"/>
</dbReference>
<dbReference type="InterPro" id="IPR006204">
    <property type="entry name" value="GHMP_kinase_N_dom"/>
</dbReference>
<dbReference type="InterPro" id="IPR004424">
    <property type="entry name" value="IspE"/>
</dbReference>
<dbReference type="InterPro" id="IPR020568">
    <property type="entry name" value="Ribosomal_Su5_D2-typ_SF"/>
</dbReference>
<dbReference type="InterPro" id="IPR014721">
    <property type="entry name" value="Ribsml_uS5_D2-typ_fold_subgr"/>
</dbReference>
<dbReference type="NCBIfam" id="TIGR00154">
    <property type="entry name" value="ispE"/>
    <property type="match status" value="1"/>
</dbReference>
<dbReference type="NCBIfam" id="NF011202">
    <property type="entry name" value="PRK14608.1"/>
    <property type="match status" value="1"/>
</dbReference>
<dbReference type="PANTHER" id="PTHR43527">
    <property type="entry name" value="4-DIPHOSPHOCYTIDYL-2-C-METHYL-D-ERYTHRITOL KINASE, CHLOROPLASTIC"/>
    <property type="match status" value="1"/>
</dbReference>
<dbReference type="PANTHER" id="PTHR43527:SF2">
    <property type="entry name" value="4-DIPHOSPHOCYTIDYL-2-C-METHYL-D-ERYTHRITOL KINASE, CHLOROPLASTIC"/>
    <property type="match status" value="1"/>
</dbReference>
<dbReference type="Pfam" id="PF08544">
    <property type="entry name" value="GHMP_kinases_C"/>
    <property type="match status" value="1"/>
</dbReference>
<dbReference type="Pfam" id="PF00288">
    <property type="entry name" value="GHMP_kinases_N"/>
    <property type="match status" value="1"/>
</dbReference>
<dbReference type="PIRSF" id="PIRSF010376">
    <property type="entry name" value="IspE"/>
    <property type="match status" value="1"/>
</dbReference>
<dbReference type="SUPFAM" id="SSF55060">
    <property type="entry name" value="GHMP Kinase, C-terminal domain"/>
    <property type="match status" value="1"/>
</dbReference>
<dbReference type="SUPFAM" id="SSF54211">
    <property type="entry name" value="Ribosomal protein S5 domain 2-like"/>
    <property type="match status" value="1"/>
</dbReference>
<reference key="1">
    <citation type="journal article" date="2005" name="DNA Res.">
        <title>Complete genome sequence of the facultative anaerobic magnetotactic bacterium Magnetospirillum sp. strain AMB-1.</title>
        <authorList>
            <person name="Matsunaga T."/>
            <person name="Okamura Y."/>
            <person name="Fukuda Y."/>
            <person name="Wahyudi A.T."/>
            <person name="Murase Y."/>
            <person name="Takeyama H."/>
        </authorList>
    </citation>
    <scope>NUCLEOTIDE SEQUENCE [LARGE SCALE GENOMIC DNA]</scope>
    <source>
        <strain>ATCC 700264 / AMB-1</strain>
    </source>
</reference>
<sequence length="285" mass="29153">MTSFSIEAPAKVNLTLHVVGKRDDGYHLLDSLVVFAGIGDTLEFSPAETLSLEVTGPTASQIPDGENIVLKAARLLAEATGVTKGAAIRLTKRLPVAAGIGGGSADAAAALKGLMRLWGVAPPAETLRRVALSIGADVPVCLAGTPMRMMGVGEVLEPAPTLPPAWLVLVNPLVPLHTPPVFKARTGPFSAADPLTAPPRDAKGLAEALAARRNDLTPPAITIEPVVGEVLAAIAATADCLLPRMSGSGATCFGLYAEEAQARAAAAQLGAAHPAWWIAPAQLLS</sequence>